<dbReference type="EC" id="2.7.11.1"/>
<dbReference type="EMBL" id="L36721">
    <property type="protein sequence ID" value="AAA50302.1"/>
    <property type="molecule type" value="Genomic_DNA"/>
</dbReference>
<dbReference type="EMBL" id="U67264">
    <property type="protein sequence ID" value="AAB54091.1"/>
    <property type="molecule type" value="Genomic_DNA"/>
</dbReference>
<dbReference type="SMR" id="P41719"/>
<dbReference type="BRENDA" id="2.7.11.1">
    <property type="organism ID" value="2615"/>
</dbReference>
<dbReference type="GO" id="GO:0005524">
    <property type="term" value="F:ATP binding"/>
    <property type="evidence" value="ECO:0007669"/>
    <property type="project" value="UniProtKB-KW"/>
</dbReference>
<dbReference type="GO" id="GO:0106310">
    <property type="term" value="F:protein serine kinase activity"/>
    <property type="evidence" value="ECO:0007669"/>
    <property type="project" value="RHEA"/>
</dbReference>
<dbReference type="GO" id="GO:0004674">
    <property type="term" value="F:protein serine/threonine kinase activity"/>
    <property type="evidence" value="ECO:0007669"/>
    <property type="project" value="UniProtKB-KW"/>
</dbReference>
<dbReference type="Gene3D" id="3.30.200.20">
    <property type="entry name" value="Phosphorylase Kinase, domain 1"/>
    <property type="match status" value="1"/>
</dbReference>
<dbReference type="Gene3D" id="1.10.510.10">
    <property type="entry name" value="Transferase(Phosphotransferase) domain 1"/>
    <property type="match status" value="1"/>
</dbReference>
<dbReference type="InterPro" id="IPR011009">
    <property type="entry name" value="Kinase-like_dom_sf"/>
</dbReference>
<dbReference type="InterPro" id="IPR000719">
    <property type="entry name" value="Prot_kinase_dom"/>
</dbReference>
<dbReference type="InterPro" id="IPR008271">
    <property type="entry name" value="Ser/Thr_kinase_AS"/>
</dbReference>
<dbReference type="PANTHER" id="PTHR24351">
    <property type="entry name" value="RIBOSOMAL PROTEIN S6 KINASE"/>
    <property type="match status" value="1"/>
</dbReference>
<dbReference type="Pfam" id="PF00069">
    <property type="entry name" value="Pkinase"/>
    <property type="match status" value="1"/>
</dbReference>
<dbReference type="SMART" id="SM00220">
    <property type="entry name" value="S_TKc"/>
    <property type="match status" value="1"/>
</dbReference>
<dbReference type="SUPFAM" id="SSF56112">
    <property type="entry name" value="Protein kinase-like (PK-like)"/>
    <property type="match status" value="1"/>
</dbReference>
<dbReference type="PROSITE" id="PS50011">
    <property type="entry name" value="PROTEIN_KINASE_DOM"/>
    <property type="match status" value="1"/>
</dbReference>
<dbReference type="PROSITE" id="PS00108">
    <property type="entry name" value="PROTEIN_KINASE_ST"/>
    <property type="match status" value="1"/>
</dbReference>
<feature type="chain" id="PRO_0000086543" description="Serine/threonine-protein kinase 1">
    <location>
        <begin position="1"/>
        <end position="267"/>
    </location>
</feature>
<feature type="domain" description="Protein kinase" evidence="1">
    <location>
        <begin position="18"/>
        <end position="266"/>
    </location>
</feature>
<feature type="active site" description="Proton acceptor" evidence="1 2">
    <location>
        <position position="134"/>
    </location>
</feature>
<feature type="binding site" evidence="1">
    <location>
        <begin position="24"/>
        <end position="32"/>
    </location>
    <ligand>
        <name>ATP</name>
        <dbReference type="ChEBI" id="CHEBI:30616"/>
    </ligand>
</feature>
<feature type="binding site" evidence="1">
    <location>
        <position position="47"/>
    </location>
    <ligand>
        <name>ATP</name>
        <dbReference type="ChEBI" id="CHEBI:30616"/>
    </ligand>
</feature>
<protein>
    <recommendedName>
        <fullName>Serine/threonine-protein kinase 1</fullName>
        <ecNumber>2.7.11.1</ecNumber>
    </recommendedName>
</protein>
<organism>
    <name type="scientific">Heliothis zea nuclear polyhedrosis virus</name>
    <name type="common">HzSNPV</name>
    <name type="synonym">Helicoverpa zea single nucleocapsid nuclear polyhedrosis virus</name>
    <dbReference type="NCBI Taxonomy" id="28290"/>
    <lineage>
        <taxon>Viruses</taxon>
        <taxon>Viruses incertae sedis</taxon>
        <taxon>Naldaviricetes</taxon>
        <taxon>Lefavirales</taxon>
        <taxon>Baculoviridae</taxon>
        <taxon>Alphabaculovirus</taxon>
    </lineage>
</organism>
<reference key="1">
    <citation type="submission" date="1994-10" db="EMBL/GenBank/DDBJ databases">
        <authorList>
            <person name="Tribe D."/>
            <person name="Bulach D.M."/>
            <person name="Goodge K."/>
            <person name="Robertson A.P.S."/>
            <person name="Wu T."/>
            <person name="Lee H."/>
            <person name="McAdams A."/>
            <person name="Cowan P.J."/>
        </authorList>
    </citation>
    <scope>NUCLEOTIDE SEQUENCE [GENOMIC DNA]</scope>
    <source>
        <strain>Elkar</strain>
    </source>
</reference>
<reference key="2">
    <citation type="journal article" date="1997" name="Virus Res.">
        <title>Genetically variable triplet repeats in a RING-finger ORF of Helicoverpa species baculoviruses.</title>
        <authorList>
            <person name="Le T.H."/>
            <person name="Wu T."/>
            <person name="Robertson A.P.S."/>
            <person name="Bulach D.M."/>
            <person name="Cowan P.J."/>
            <person name="Goodge K."/>
            <person name="Tribe D.E."/>
        </authorList>
    </citation>
    <scope>NUCLEOTIDE SEQUENCE [GENOMIC DNA]</scope>
    <source>
        <strain>Elkar</strain>
    </source>
</reference>
<evidence type="ECO:0000255" key="1">
    <source>
        <dbReference type="PROSITE-ProRule" id="PRU00159"/>
    </source>
</evidence>
<evidence type="ECO:0000255" key="2">
    <source>
        <dbReference type="PROSITE-ProRule" id="PRU10027"/>
    </source>
</evidence>
<sequence length="267" mass="31532">MDDRFVKEINQFFAEIKIQNNVRLVDGKFGKMCVIKHEPTGKLFVKKSVAIKYVTEIEPLVHQLMKDNRYFIKLYYSLTTLKSQILILDYVAGGDLFDFLKKHKKVSEAETRSIVGQLTEALNALHSYKIIHNDLKLENVLYVRHKQIYLCDYGLCKIVNTSSCRDGTKEYMSPEKLKRQNYDVHVDWWALGILTYELLIGHHPYKHSNDNEEDFDLDVLQQRQQKKLHKYNFLSSDAQKFLEAMLMYNINYRLCTYETVIKHSFLS</sequence>
<organismHost>
    <name type="scientific">Lepidoptera</name>
    <name type="common">butterflies and moths</name>
    <dbReference type="NCBI Taxonomy" id="7088"/>
</organismHost>
<name>PK1_NPVHZ</name>
<keyword id="KW-0067">ATP-binding</keyword>
<keyword id="KW-0418">Kinase</keyword>
<keyword id="KW-0547">Nucleotide-binding</keyword>
<keyword id="KW-0723">Serine/threonine-protein kinase</keyword>
<keyword id="KW-0808">Transferase</keyword>
<accession>P41719</accession>
<proteinExistence type="inferred from homology"/>
<gene>
    <name type="primary">PK1</name>
    <name type="synonym">PK-1</name>
</gene>
<comment type="catalytic activity">
    <reaction>
        <text>L-seryl-[protein] + ATP = O-phospho-L-seryl-[protein] + ADP + H(+)</text>
        <dbReference type="Rhea" id="RHEA:17989"/>
        <dbReference type="Rhea" id="RHEA-COMP:9863"/>
        <dbReference type="Rhea" id="RHEA-COMP:11604"/>
        <dbReference type="ChEBI" id="CHEBI:15378"/>
        <dbReference type="ChEBI" id="CHEBI:29999"/>
        <dbReference type="ChEBI" id="CHEBI:30616"/>
        <dbReference type="ChEBI" id="CHEBI:83421"/>
        <dbReference type="ChEBI" id="CHEBI:456216"/>
        <dbReference type="EC" id="2.7.11.1"/>
    </reaction>
</comment>
<comment type="catalytic activity">
    <reaction>
        <text>L-threonyl-[protein] + ATP = O-phospho-L-threonyl-[protein] + ADP + H(+)</text>
        <dbReference type="Rhea" id="RHEA:46608"/>
        <dbReference type="Rhea" id="RHEA-COMP:11060"/>
        <dbReference type="Rhea" id="RHEA-COMP:11605"/>
        <dbReference type="ChEBI" id="CHEBI:15378"/>
        <dbReference type="ChEBI" id="CHEBI:30013"/>
        <dbReference type="ChEBI" id="CHEBI:30616"/>
        <dbReference type="ChEBI" id="CHEBI:61977"/>
        <dbReference type="ChEBI" id="CHEBI:456216"/>
        <dbReference type="EC" id="2.7.11.1"/>
    </reaction>
</comment>
<comment type="similarity">
    <text evidence="1">Belongs to the protein kinase superfamily. Ser/Thr protein kinase family.</text>
</comment>